<accession>B5ZYS3</accession>
<reference key="1">
    <citation type="journal article" date="2010" name="Stand. Genomic Sci.">
        <title>Complete genome sequence of Rhizobium leguminosarum bv trifolii strain WSM2304, an effective microsymbiont of the South American clover Trifolium polymorphum.</title>
        <authorList>
            <person name="Reeve W."/>
            <person name="O'Hara G."/>
            <person name="Chain P."/>
            <person name="Ardley J."/>
            <person name="Brau L."/>
            <person name="Nandesena K."/>
            <person name="Tiwari R."/>
            <person name="Malfatti S."/>
            <person name="Kiss H."/>
            <person name="Lapidus A."/>
            <person name="Copeland A."/>
            <person name="Nolan M."/>
            <person name="Land M."/>
            <person name="Ivanova N."/>
            <person name="Mavromatis K."/>
            <person name="Markowitz V."/>
            <person name="Kyrpides N."/>
            <person name="Melino V."/>
            <person name="Denton M."/>
            <person name="Yates R."/>
            <person name="Howieson J."/>
        </authorList>
    </citation>
    <scope>NUCLEOTIDE SEQUENCE [LARGE SCALE GENOMIC DNA]</scope>
    <source>
        <strain>WSM2304</strain>
    </source>
</reference>
<sequence>MAKKVAGQLKLQVKAGSANPSPPIGPALGQRGINIMEFCKAFNAATQEMEKGMPIPVVITYYQDKSFTFAMKQPPVSYWLKKEAKITSGSKTPGKGAKAGSLTKAQIKSIAEAKMKDLNAADIEGAMAMIEGSARAMGLEVVG</sequence>
<organism>
    <name type="scientific">Rhizobium leguminosarum bv. trifolii (strain WSM2304)</name>
    <dbReference type="NCBI Taxonomy" id="395492"/>
    <lineage>
        <taxon>Bacteria</taxon>
        <taxon>Pseudomonadati</taxon>
        <taxon>Pseudomonadota</taxon>
        <taxon>Alphaproteobacteria</taxon>
        <taxon>Hyphomicrobiales</taxon>
        <taxon>Rhizobiaceae</taxon>
        <taxon>Rhizobium/Agrobacterium group</taxon>
        <taxon>Rhizobium</taxon>
    </lineage>
</organism>
<evidence type="ECO:0000255" key="1">
    <source>
        <dbReference type="HAMAP-Rule" id="MF_00736"/>
    </source>
</evidence>
<evidence type="ECO:0000305" key="2"/>
<keyword id="KW-0488">Methylation</keyword>
<keyword id="KW-1185">Reference proteome</keyword>
<keyword id="KW-0687">Ribonucleoprotein</keyword>
<keyword id="KW-0689">Ribosomal protein</keyword>
<keyword id="KW-0694">RNA-binding</keyword>
<keyword id="KW-0699">rRNA-binding</keyword>
<gene>
    <name evidence="1" type="primary">rplK</name>
    <name type="ordered locus">Rleg2_1320</name>
</gene>
<protein>
    <recommendedName>
        <fullName evidence="1">Large ribosomal subunit protein uL11</fullName>
    </recommendedName>
    <alternativeName>
        <fullName evidence="2">50S ribosomal protein L11</fullName>
    </alternativeName>
</protein>
<feature type="chain" id="PRO_1000195698" description="Large ribosomal subunit protein uL11">
    <location>
        <begin position="1"/>
        <end position="143"/>
    </location>
</feature>
<comment type="function">
    <text evidence="1">Forms part of the ribosomal stalk which helps the ribosome interact with GTP-bound translation factors.</text>
</comment>
<comment type="subunit">
    <text evidence="1">Part of the ribosomal stalk of the 50S ribosomal subunit. Interacts with L10 and the large rRNA to form the base of the stalk. L10 forms an elongated spine to which L12 dimers bind in a sequential fashion forming a multimeric L10(L12)X complex.</text>
</comment>
<comment type="PTM">
    <text evidence="1">One or more lysine residues are methylated.</text>
</comment>
<comment type="similarity">
    <text evidence="1">Belongs to the universal ribosomal protein uL11 family.</text>
</comment>
<dbReference type="EMBL" id="CP001191">
    <property type="protein sequence ID" value="ACI54614.1"/>
    <property type="molecule type" value="Genomic_DNA"/>
</dbReference>
<dbReference type="RefSeq" id="WP_003547518.1">
    <property type="nucleotide sequence ID" value="NC_011369.1"/>
</dbReference>
<dbReference type="SMR" id="B5ZYS3"/>
<dbReference type="STRING" id="395492.Rleg2_1320"/>
<dbReference type="GeneID" id="91148116"/>
<dbReference type="KEGG" id="rlt:Rleg2_1320"/>
<dbReference type="eggNOG" id="COG0080">
    <property type="taxonomic scope" value="Bacteria"/>
</dbReference>
<dbReference type="HOGENOM" id="CLU_074237_2_0_5"/>
<dbReference type="Proteomes" id="UP000008330">
    <property type="component" value="Chromosome"/>
</dbReference>
<dbReference type="GO" id="GO:0022625">
    <property type="term" value="C:cytosolic large ribosomal subunit"/>
    <property type="evidence" value="ECO:0007669"/>
    <property type="project" value="TreeGrafter"/>
</dbReference>
<dbReference type="GO" id="GO:0070180">
    <property type="term" value="F:large ribosomal subunit rRNA binding"/>
    <property type="evidence" value="ECO:0007669"/>
    <property type="project" value="UniProtKB-UniRule"/>
</dbReference>
<dbReference type="GO" id="GO:0003735">
    <property type="term" value="F:structural constituent of ribosome"/>
    <property type="evidence" value="ECO:0007669"/>
    <property type="project" value="InterPro"/>
</dbReference>
<dbReference type="GO" id="GO:0006412">
    <property type="term" value="P:translation"/>
    <property type="evidence" value="ECO:0007669"/>
    <property type="project" value="UniProtKB-UniRule"/>
</dbReference>
<dbReference type="CDD" id="cd00349">
    <property type="entry name" value="Ribosomal_L11"/>
    <property type="match status" value="1"/>
</dbReference>
<dbReference type="FunFam" id="3.30.1550.10:FF:000001">
    <property type="entry name" value="50S ribosomal protein L11"/>
    <property type="match status" value="1"/>
</dbReference>
<dbReference type="Gene3D" id="1.10.10.250">
    <property type="entry name" value="Ribosomal protein L11, C-terminal domain"/>
    <property type="match status" value="1"/>
</dbReference>
<dbReference type="Gene3D" id="3.30.1550.10">
    <property type="entry name" value="Ribosomal protein L11/L12, N-terminal domain"/>
    <property type="match status" value="1"/>
</dbReference>
<dbReference type="HAMAP" id="MF_00736">
    <property type="entry name" value="Ribosomal_uL11"/>
    <property type="match status" value="1"/>
</dbReference>
<dbReference type="InterPro" id="IPR000911">
    <property type="entry name" value="Ribosomal_uL11"/>
</dbReference>
<dbReference type="InterPro" id="IPR006519">
    <property type="entry name" value="Ribosomal_uL11_bac-typ"/>
</dbReference>
<dbReference type="InterPro" id="IPR020783">
    <property type="entry name" value="Ribosomal_uL11_C"/>
</dbReference>
<dbReference type="InterPro" id="IPR036769">
    <property type="entry name" value="Ribosomal_uL11_C_sf"/>
</dbReference>
<dbReference type="InterPro" id="IPR020784">
    <property type="entry name" value="Ribosomal_uL11_N"/>
</dbReference>
<dbReference type="InterPro" id="IPR036796">
    <property type="entry name" value="Ribosomal_uL11_N_sf"/>
</dbReference>
<dbReference type="NCBIfam" id="TIGR01632">
    <property type="entry name" value="L11_bact"/>
    <property type="match status" value="1"/>
</dbReference>
<dbReference type="PANTHER" id="PTHR11661">
    <property type="entry name" value="60S RIBOSOMAL PROTEIN L12"/>
    <property type="match status" value="1"/>
</dbReference>
<dbReference type="PANTHER" id="PTHR11661:SF1">
    <property type="entry name" value="LARGE RIBOSOMAL SUBUNIT PROTEIN UL11M"/>
    <property type="match status" value="1"/>
</dbReference>
<dbReference type="Pfam" id="PF00298">
    <property type="entry name" value="Ribosomal_L11"/>
    <property type="match status" value="1"/>
</dbReference>
<dbReference type="Pfam" id="PF03946">
    <property type="entry name" value="Ribosomal_L11_N"/>
    <property type="match status" value="1"/>
</dbReference>
<dbReference type="SMART" id="SM00649">
    <property type="entry name" value="RL11"/>
    <property type="match status" value="1"/>
</dbReference>
<dbReference type="SUPFAM" id="SSF54747">
    <property type="entry name" value="Ribosomal L11/L12e N-terminal domain"/>
    <property type="match status" value="1"/>
</dbReference>
<dbReference type="SUPFAM" id="SSF46906">
    <property type="entry name" value="Ribosomal protein L11, C-terminal domain"/>
    <property type="match status" value="1"/>
</dbReference>
<proteinExistence type="inferred from homology"/>
<name>RL11_RHILW</name>